<dbReference type="EMBL" id="AJ560717">
    <property type="protein sequence ID" value="CAD90759.1"/>
    <property type="molecule type" value="Genomic_DNA"/>
</dbReference>
<dbReference type="SMR" id="Q85UK6"/>
<dbReference type="GO" id="GO:0015934">
    <property type="term" value="C:large ribosomal subunit"/>
    <property type="evidence" value="ECO:0007669"/>
    <property type="project" value="InterPro"/>
</dbReference>
<dbReference type="GO" id="GO:0009536">
    <property type="term" value="C:plastid"/>
    <property type="evidence" value="ECO:0007669"/>
    <property type="project" value="UniProtKB-SubCell"/>
</dbReference>
<dbReference type="GO" id="GO:0019843">
    <property type="term" value="F:rRNA binding"/>
    <property type="evidence" value="ECO:0007669"/>
    <property type="project" value="UniProtKB-KW"/>
</dbReference>
<dbReference type="GO" id="GO:0003735">
    <property type="term" value="F:structural constituent of ribosome"/>
    <property type="evidence" value="ECO:0007669"/>
    <property type="project" value="InterPro"/>
</dbReference>
<dbReference type="GO" id="GO:0006412">
    <property type="term" value="P:translation"/>
    <property type="evidence" value="ECO:0007669"/>
    <property type="project" value="InterPro"/>
</dbReference>
<dbReference type="CDD" id="cd00336">
    <property type="entry name" value="Ribosomal_L22"/>
    <property type="match status" value="1"/>
</dbReference>
<dbReference type="FunFam" id="3.90.470.10:FF:000006">
    <property type="entry name" value="50S ribosomal protein L22, chloroplastic"/>
    <property type="match status" value="1"/>
</dbReference>
<dbReference type="Gene3D" id="3.90.470.10">
    <property type="entry name" value="Ribosomal protein L22/L17"/>
    <property type="match status" value="1"/>
</dbReference>
<dbReference type="HAMAP" id="MF_01331_B">
    <property type="entry name" value="Ribosomal_uL22_B"/>
    <property type="match status" value="1"/>
</dbReference>
<dbReference type="InterPro" id="IPR001063">
    <property type="entry name" value="Ribosomal_uL22"/>
</dbReference>
<dbReference type="InterPro" id="IPR005727">
    <property type="entry name" value="Ribosomal_uL22_bac/chlpt-type"/>
</dbReference>
<dbReference type="InterPro" id="IPR047867">
    <property type="entry name" value="Ribosomal_uL22_bac/org-type"/>
</dbReference>
<dbReference type="InterPro" id="IPR018260">
    <property type="entry name" value="Ribosomal_uL22_CS"/>
</dbReference>
<dbReference type="InterPro" id="IPR036394">
    <property type="entry name" value="Ribosomal_uL22_sf"/>
</dbReference>
<dbReference type="NCBIfam" id="TIGR01044">
    <property type="entry name" value="rplV_bact"/>
    <property type="match status" value="1"/>
</dbReference>
<dbReference type="PANTHER" id="PTHR13501">
    <property type="entry name" value="CHLOROPLAST 50S RIBOSOMAL PROTEIN L22-RELATED"/>
    <property type="match status" value="1"/>
</dbReference>
<dbReference type="PANTHER" id="PTHR13501:SF10">
    <property type="entry name" value="LARGE RIBOSOMAL SUBUNIT PROTEIN UL22M"/>
    <property type="match status" value="1"/>
</dbReference>
<dbReference type="Pfam" id="PF00237">
    <property type="entry name" value="Ribosomal_L22"/>
    <property type="match status" value="1"/>
</dbReference>
<dbReference type="SUPFAM" id="SSF54843">
    <property type="entry name" value="Ribosomal protein L22"/>
    <property type="match status" value="1"/>
</dbReference>
<dbReference type="PROSITE" id="PS00464">
    <property type="entry name" value="RIBOSOMAL_L22"/>
    <property type="match status" value="1"/>
</dbReference>
<organism>
    <name type="scientific">Orobanche minor</name>
    <name type="common">Small broomrape</name>
    <name type="synonym">Hellroot</name>
    <dbReference type="NCBI Taxonomy" id="36748"/>
    <lineage>
        <taxon>Eukaryota</taxon>
        <taxon>Viridiplantae</taxon>
        <taxon>Streptophyta</taxon>
        <taxon>Embryophyta</taxon>
        <taxon>Tracheophyta</taxon>
        <taxon>Spermatophyta</taxon>
        <taxon>Magnoliopsida</taxon>
        <taxon>eudicotyledons</taxon>
        <taxon>Gunneridae</taxon>
        <taxon>Pentapetalae</taxon>
        <taxon>asterids</taxon>
        <taxon>lamiids</taxon>
        <taxon>Lamiales</taxon>
        <taxon>Orobanchaceae</taxon>
        <taxon>Orobancheae</taxon>
        <taxon>Orobanche</taxon>
    </lineage>
</organism>
<name>RK22_OROMI</name>
<evidence type="ECO:0000250" key="1"/>
<evidence type="ECO:0000305" key="2"/>
<proteinExistence type="inferred from homology"/>
<comment type="function">
    <text evidence="1">This protein binds specifically to 23S rRNA.</text>
</comment>
<comment type="function">
    <text evidence="1">The globular domain of the protein is located near the polypeptide exit tunnel on the outside of the subunit, while an extended beta-hairpin is found that lines the wall of the exit tunnel in the center of the 70S ribosome.</text>
</comment>
<comment type="subunit">
    <text evidence="1">Part of the 50S ribosomal subunit.</text>
</comment>
<comment type="subcellular location">
    <subcellularLocation>
        <location>Plastid</location>
    </subcellularLocation>
</comment>
<comment type="similarity">
    <text evidence="2">Belongs to the universal ribosomal protein uL22 family.</text>
</comment>
<reference key="1">
    <citation type="thesis" date="1997" institute="University of Dublin" country="Ireland">
        <title>Orobanche minor plastid DNA: evidence for a subset of essential tRNA genes in the plastid DNA of nonphotosynthetic plants.</title>
        <authorList>
            <person name="Lohan A.J."/>
        </authorList>
    </citation>
    <scope>NUCLEOTIDE SEQUENCE [GENOMIC DNA]</scope>
</reference>
<reference key="2">
    <citation type="submission" date="2003-05" db="EMBL/GenBank/DDBJ databases">
        <authorList>
            <person name="Wolfe K.H."/>
        </authorList>
    </citation>
    <scope>NUCLEOTIDE SEQUENCE [GENOMIC DNA]</scope>
</reference>
<geneLocation type="non-photosynthetic plastid"/>
<sequence>MLKNKTKKTEVYALCRHISLSADKARRVIDQIRGRSYEETLMILELMPYRACYPILKLVYSAASNAAYSMDSAEVNLVISKAEVNEGTITKKFKPRARGRSYVIKRTTCHITIVVKDISLDKYEEIYSFKNPIWKNTIDVYSNGVVWHKK</sequence>
<keyword id="KW-0934">Plastid</keyword>
<keyword id="KW-0687">Ribonucleoprotein</keyword>
<keyword id="KW-0689">Ribosomal protein</keyword>
<keyword id="KW-0694">RNA-binding</keyword>
<keyword id="KW-0699">rRNA-binding</keyword>
<protein>
    <recommendedName>
        <fullName evidence="2">Large ribosomal subunit protein uL22c</fullName>
    </recommendedName>
    <alternativeName>
        <fullName>50S ribosomal protein L22, plastid</fullName>
    </alternativeName>
</protein>
<gene>
    <name type="primary">rpl22</name>
</gene>
<accession>Q85UK6</accession>
<feature type="chain" id="PRO_0000125314" description="Large ribosomal subunit protein uL22c">
    <location>
        <begin position="1"/>
        <end position="150"/>
    </location>
</feature>